<proteinExistence type="inferred from homology"/>
<reference key="1">
    <citation type="journal article" date="2006" name="Virology">
        <title>Polydnavirus genomes reflect their dual roles as mutualists and pathogens.</title>
        <authorList>
            <person name="Webb B.A."/>
            <person name="Strand M.R."/>
            <person name="Dickey S.E."/>
            <person name="Beck M.H."/>
            <person name="Hilgarth R.S."/>
            <person name="Barney W.E."/>
            <person name="Kadash K."/>
            <person name="Kroemer J.A."/>
            <person name="Lindstrom K.G."/>
            <person name="Rattanadechakul W."/>
            <person name="Shelby K.S."/>
            <person name="Thoetkiattikul H."/>
            <person name="Turnbull M.W."/>
            <person name="Witherell R.A."/>
        </authorList>
    </citation>
    <scope>NUCLEOTIDE SEQUENCE [GENOMIC DNA]</scope>
</reference>
<reference key="2">
    <citation type="journal article" date="2005" name="Proc. Natl. Acad. Sci. U.S.A.">
        <title>Inhibitor kappaB-like proteins from a polydnavirus inhibit NF-kappaB activation and suppress the insect immune response.</title>
        <authorList>
            <person name="Thoetkiattikul H."/>
            <person name="Beck M.H."/>
            <person name="Strand M.R."/>
        </authorList>
    </citation>
    <scope>FUNCTION</scope>
</reference>
<gene>
    <name type="primary">H4</name>
</gene>
<feature type="chain" id="PRO_0000405365" description="I-Kappa-B like protein H1">
    <location>
        <begin position="1"/>
        <end position="192"/>
    </location>
</feature>
<feature type="repeat" description="ANK 1">
    <location>
        <begin position="94"/>
        <end position="126"/>
    </location>
</feature>
<feature type="repeat" description="ANK 2">
    <location>
        <begin position="131"/>
        <end position="161"/>
    </location>
</feature>
<feature type="repeat" description="ANK 3">
    <location>
        <begin position="165"/>
        <end position="192"/>
    </location>
</feature>
<sequence length="192" mass="22163">MMRYYIYVQYWKRFLRLVRSFHWATSNVLLFKSDFGDTFKMRDYNLYEMLSARNGSGGTYFHEACQANSIALLWRAAGMLDESHPRILNIRDYKGAQCTHIIATSNVSCSIDMMNIVLQLGADINGQEGLAGLTPLHICVNKKNYALAEWLCQAPGIDVKVENFGKETPYDLACKMEDRKMMKIFEERSKKM</sequence>
<evidence type="ECO:0000269" key="1">
    <source>
    </source>
</evidence>
<evidence type="ECO:0000305" key="2"/>
<protein>
    <recommendedName>
        <fullName>I-Kappa-B like protein H1</fullName>
    </recommendedName>
</protein>
<organism>
    <name type="scientific">Microplitis demolitor bracovirus (isolate Webb)</name>
    <name type="common">MdBV</name>
    <dbReference type="NCBI Taxonomy" id="654919"/>
    <lineage>
        <taxon>Viruses</taxon>
        <taxon>Viruses incertae sedis</taxon>
        <taxon>Polydnaviriformidae</taxon>
        <taxon>Bracoviriform</taxon>
        <taxon>Microplitis demolitor bracovirus</taxon>
    </lineage>
</organism>
<name>IKBH1_MDBVW</name>
<dbReference type="EMBL" id="AY875685">
    <property type="protein sequence ID" value="AAW51789.1"/>
    <property type="molecule type" value="Genomic_DNA"/>
</dbReference>
<dbReference type="RefSeq" id="YP_239384.1">
    <property type="nucleotide sequence ID" value="NC_007035.1"/>
</dbReference>
<dbReference type="SMR" id="Q5I144"/>
<dbReference type="KEGG" id="vg:5075820"/>
<dbReference type="Proteomes" id="UP000008168">
    <property type="component" value="Genome"/>
</dbReference>
<dbReference type="GO" id="GO:0085034">
    <property type="term" value="P:symbiont-mediated suppression of host NF-kappaB cascade"/>
    <property type="evidence" value="ECO:0007669"/>
    <property type="project" value="UniProtKB-KW"/>
</dbReference>
<dbReference type="Gene3D" id="1.25.40.20">
    <property type="entry name" value="Ankyrin repeat-containing domain"/>
    <property type="match status" value="1"/>
</dbReference>
<dbReference type="InterPro" id="IPR002110">
    <property type="entry name" value="Ankyrin_rpt"/>
</dbReference>
<dbReference type="InterPro" id="IPR036770">
    <property type="entry name" value="Ankyrin_rpt-contain_sf"/>
</dbReference>
<dbReference type="InterPro" id="IPR051070">
    <property type="entry name" value="NF-kappa-B_inhibitor"/>
</dbReference>
<dbReference type="PANTHER" id="PTHR46680">
    <property type="entry name" value="NF-KAPPA-B INHIBITOR ALPHA"/>
    <property type="match status" value="1"/>
</dbReference>
<dbReference type="PANTHER" id="PTHR46680:SF3">
    <property type="entry name" value="NF-KAPPA-B INHIBITOR CACTUS"/>
    <property type="match status" value="1"/>
</dbReference>
<dbReference type="Pfam" id="PF13857">
    <property type="entry name" value="Ank_5"/>
    <property type="match status" value="1"/>
</dbReference>
<dbReference type="SUPFAM" id="SSF48403">
    <property type="entry name" value="Ankyrin repeat"/>
    <property type="match status" value="1"/>
</dbReference>
<dbReference type="PROSITE" id="PS50297">
    <property type="entry name" value="ANK_REP_REGION"/>
    <property type="match status" value="1"/>
</dbReference>
<comment type="function">
    <text evidence="1">Suppresses the host immune response through NF-kappa-B inactivation. Possesses ankyrin repeat domains required for NF-kappa-B binding but lacks the regulatory regions required for dissociation from NF-kappa-B and degradation. Therefore, prevents host NF-kappa-B release and subsequent activation.</text>
</comment>
<comment type="similarity">
    <text evidence="2">Belongs to the polydnaviridae I-Kappa-B-like protein family.</text>
</comment>
<accession>Q5I144</accession>
<organismHost>
    <name type="scientific">Microplitis demolitor</name>
    <name type="common">Parasitoid wasp</name>
    <dbReference type="NCBI Taxonomy" id="69319"/>
</organismHost>
<keyword id="KW-0040">ANK repeat</keyword>
<keyword id="KW-0945">Host-virus interaction</keyword>
<keyword id="KW-1100">Inhibition of host NF-kappa-B by virus</keyword>
<keyword id="KW-1185">Reference proteome</keyword>
<keyword id="KW-0677">Repeat</keyword>